<comment type="function">
    <text>Auxin response factors (ARFs) are transcriptional factors that bind specifically to the DNA sequence 5'-TGTCTC-3' found in the auxin-responsive promoter elements (AuxREs).</text>
</comment>
<comment type="subunit">
    <text evidence="1">Homo and heterodimers.</text>
</comment>
<comment type="subcellular location">
    <subcellularLocation>
        <location evidence="2">Nucleus</location>
    </subcellularLocation>
</comment>
<comment type="tissue specificity">
    <text evidence="3">Expressed in roots, culms, leaves and young panicles.</text>
</comment>
<comment type="similarity">
    <text evidence="4">Belongs to the ARF family.</text>
</comment>
<comment type="sequence caution" evidence="4">
    <conflict type="erroneous gene model prediction">
        <sequence resource="EMBL-CDS" id="AAT77393"/>
    </conflict>
</comment>
<comment type="sequence caution" evidence="4">
    <conflict type="erroneous initiation">
        <sequence resource="EMBL-CDS" id="BAG88236"/>
    </conflict>
</comment>
<gene>
    <name type="primary">ARF15</name>
    <name type="ordered locus">Os05g0563400</name>
    <name type="ordered locus">LOC_Os05g48870</name>
    <name type="ORF">OsJ_018762</name>
    <name type="ORF">OSJNBb0053D02.5</name>
</gene>
<feature type="chain" id="PRO_0000299272" description="Auxin response factor 15">
    <location>
        <begin position="1"/>
        <end position="712"/>
    </location>
</feature>
<feature type="DNA-binding region" description="TF-B3" evidence="2">
    <location>
        <begin position="142"/>
        <end position="244"/>
    </location>
</feature>
<name>ARFO_ORYSJ</name>
<accession>Q8S985</accession>
<accession>A0A0P0WQX2</accession>
<accession>B7E789</accession>
<accession>B9FLM0</accession>
<accession>Q0DFY3</accession>
<accession>Q6AUG6</accession>
<sequence>MTGIDLNTVEEDEEEAAEEVAANGSSPAPARAGAVCLELWHACAGPVAPLPRKGGVVVYLPQGHLEHLGDAPAAAAAAAAVPPHVFCRVVDVTLLADAATDEVYAQLSLVPEKEEVARRADDGEGEDGDGMKQRFARMPHMFCKTLTASDTSTHGGFSVPRRAAEDCFPPLDYSQQRPSQELVAKDLHSTEWRFRHIYRGQPRRHLLTTGWSAFVNKKKLVSGDAVLFLRGDDGELRLGVRRAAQLKNGSAFPALYNQCSNLGTLANVAHAVATESVFNIYYNPRLSQSEFIVPYWKFMKSLSQPFSVGLRFKMRYESEDATERRYTGIITGSGDTDPMWHGSKWKCLLVRWDDDAEFRRPNRVSPWEIELTSSVSGSHLSTPHSKRLKPCLPHVNPEYMVPRGGGCPDFAESAQFHKVLQGQELLGFKSHGGTAAATSQPCEARHLQYIDERSCSSDASNSILGVPRLGDRAPLGNPGFSYHCSGFGESHRLQKVLQGQELFRPYRGTLVDASMGSNGFHQQDSPRAPGVVNKWQAQLHGRAAFHGPPALALPSQSSSPPSVLMFQQANSKMPRLEFGHGQLDKHENDRRVRFGPSEGIERREQRIPLQPYPTSGEVIDGQVTVEKSHSPGRHGKDGPDNKAVGTNSCKIFGISLTEKVPAREELDDGDANYSLQSLKQVPKSLGNSCATVHEQRPVVGRVIDISTMDMMI</sequence>
<proteinExistence type="evidence at transcript level"/>
<organism>
    <name type="scientific">Oryza sativa subsp. japonica</name>
    <name type="common">Rice</name>
    <dbReference type="NCBI Taxonomy" id="39947"/>
    <lineage>
        <taxon>Eukaryota</taxon>
        <taxon>Viridiplantae</taxon>
        <taxon>Streptophyta</taxon>
        <taxon>Embryophyta</taxon>
        <taxon>Tracheophyta</taxon>
        <taxon>Spermatophyta</taxon>
        <taxon>Magnoliopsida</taxon>
        <taxon>Liliopsida</taxon>
        <taxon>Poales</taxon>
        <taxon>Poaceae</taxon>
        <taxon>BOP clade</taxon>
        <taxon>Oryzoideae</taxon>
        <taxon>Oryzeae</taxon>
        <taxon>Oryzinae</taxon>
        <taxon>Oryza</taxon>
        <taxon>Oryza sativa</taxon>
    </lineage>
</organism>
<evidence type="ECO:0000250" key="1"/>
<evidence type="ECO:0000255" key="2">
    <source>
        <dbReference type="PROSITE-ProRule" id="PRU00326"/>
    </source>
</evidence>
<evidence type="ECO:0000269" key="3">
    <source>
    </source>
</evidence>
<evidence type="ECO:0000305" key="4"/>
<protein>
    <recommendedName>
        <fullName>Auxin response factor 15</fullName>
    </recommendedName>
    <alternativeName>
        <fullName>ETTIN-like protein 1</fullName>
    </alternativeName>
    <alternativeName>
        <fullName>OsETTIN1</fullName>
    </alternativeName>
</protein>
<dbReference type="EMBL" id="AB071290">
    <property type="protein sequence ID" value="BAB85910.1"/>
    <property type="molecule type" value="mRNA"/>
</dbReference>
<dbReference type="EMBL" id="AC124143">
    <property type="protein sequence ID" value="AAT77393.1"/>
    <property type="status" value="ALT_SEQ"/>
    <property type="molecule type" value="Genomic_DNA"/>
</dbReference>
<dbReference type="EMBL" id="AP008211">
    <property type="protein sequence ID" value="BAH93251.1"/>
    <property type="molecule type" value="Genomic_DNA"/>
</dbReference>
<dbReference type="EMBL" id="AP014961">
    <property type="protein sequence ID" value="BAS95343.1"/>
    <property type="molecule type" value="Genomic_DNA"/>
</dbReference>
<dbReference type="EMBL" id="CM000142">
    <property type="protein sequence ID" value="EEE64694.1"/>
    <property type="molecule type" value="Genomic_DNA"/>
</dbReference>
<dbReference type="EMBL" id="AK062170">
    <property type="protein sequence ID" value="BAG88236.1"/>
    <property type="status" value="ALT_INIT"/>
    <property type="molecule type" value="mRNA"/>
</dbReference>
<dbReference type="RefSeq" id="XP_015640263.1">
    <property type="nucleotide sequence ID" value="XM_015784777.1"/>
</dbReference>
<dbReference type="SMR" id="Q8S985"/>
<dbReference type="FunCoup" id="Q8S985">
    <property type="interactions" value="1972"/>
</dbReference>
<dbReference type="STRING" id="39947.Q8S985"/>
<dbReference type="PaxDb" id="39947-Q8S985"/>
<dbReference type="EnsemblPlants" id="Os05t0563400-01">
    <property type="protein sequence ID" value="Os05t0563400-01"/>
    <property type="gene ID" value="Os05g0563400"/>
</dbReference>
<dbReference type="Gramene" id="Os05t0563400-01">
    <property type="protein sequence ID" value="Os05t0563400-01"/>
    <property type="gene ID" value="Os05g0563400"/>
</dbReference>
<dbReference type="KEGG" id="dosa:Os05g0563400"/>
<dbReference type="eggNOG" id="ENOG502QQSY">
    <property type="taxonomic scope" value="Eukaryota"/>
</dbReference>
<dbReference type="HOGENOM" id="CLU_002626_2_2_1"/>
<dbReference type="InParanoid" id="Q8S985"/>
<dbReference type="OMA" id="DTDPMWH"/>
<dbReference type="OrthoDB" id="624437at2759"/>
<dbReference type="PlantReactome" id="R-OSA-5608118">
    <property type="pathway name" value="Auxin signalling"/>
</dbReference>
<dbReference type="Proteomes" id="UP000000763">
    <property type="component" value="Chromosome 5"/>
</dbReference>
<dbReference type="Proteomes" id="UP000007752">
    <property type="component" value="Chromosome 5"/>
</dbReference>
<dbReference type="Proteomes" id="UP000059680">
    <property type="component" value="Chromosome 5"/>
</dbReference>
<dbReference type="ExpressionAtlas" id="Q8S985">
    <property type="expression patterns" value="baseline and differential"/>
</dbReference>
<dbReference type="GO" id="GO:0005634">
    <property type="term" value="C:nucleus"/>
    <property type="evidence" value="ECO:0007669"/>
    <property type="project" value="UniProtKB-SubCell"/>
</dbReference>
<dbReference type="GO" id="GO:0003677">
    <property type="term" value="F:DNA binding"/>
    <property type="evidence" value="ECO:0007669"/>
    <property type="project" value="UniProtKB-KW"/>
</dbReference>
<dbReference type="GO" id="GO:0009734">
    <property type="term" value="P:auxin-activated signaling pathway"/>
    <property type="evidence" value="ECO:0007669"/>
    <property type="project" value="UniProtKB-KW"/>
</dbReference>
<dbReference type="GO" id="GO:0006355">
    <property type="term" value="P:regulation of DNA-templated transcription"/>
    <property type="evidence" value="ECO:0007669"/>
    <property type="project" value="InterPro"/>
</dbReference>
<dbReference type="CDD" id="cd10017">
    <property type="entry name" value="B3_DNA"/>
    <property type="match status" value="1"/>
</dbReference>
<dbReference type="FunFam" id="2.30.30.1040:FF:000001">
    <property type="entry name" value="Auxin response factor"/>
    <property type="match status" value="1"/>
</dbReference>
<dbReference type="FunFam" id="2.40.330.10:FF:000001">
    <property type="entry name" value="Auxin response factor"/>
    <property type="match status" value="1"/>
</dbReference>
<dbReference type="Gene3D" id="2.30.30.1040">
    <property type="match status" value="1"/>
</dbReference>
<dbReference type="Gene3D" id="2.40.330.10">
    <property type="entry name" value="DNA-binding pseudobarrel domain"/>
    <property type="match status" value="1"/>
</dbReference>
<dbReference type="InterPro" id="IPR010525">
    <property type="entry name" value="ARF_dom"/>
</dbReference>
<dbReference type="InterPro" id="IPR044835">
    <property type="entry name" value="ARF_plant"/>
</dbReference>
<dbReference type="InterPro" id="IPR003340">
    <property type="entry name" value="B3_DNA-bd"/>
</dbReference>
<dbReference type="InterPro" id="IPR015300">
    <property type="entry name" value="DNA-bd_pseudobarrel_sf"/>
</dbReference>
<dbReference type="PANTHER" id="PTHR31384:SF5">
    <property type="entry name" value="AUXIN RESPONSE FACTOR 3"/>
    <property type="match status" value="1"/>
</dbReference>
<dbReference type="PANTHER" id="PTHR31384">
    <property type="entry name" value="AUXIN RESPONSE FACTOR 4-RELATED"/>
    <property type="match status" value="1"/>
</dbReference>
<dbReference type="Pfam" id="PF06507">
    <property type="entry name" value="ARF_AD"/>
    <property type="match status" value="1"/>
</dbReference>
<dbReference type="Pfam" id="PF02362">
    <property type="entry name" value="B3"/>
    <property type="match status" value="1"/>
</dbReference>
<dbReference type="SMART" id="SM01019">
    <property type="entry name" value="B3"/>
    <property type="match status" value="1"/>
</dbReference>
<dbReference type="SUPFAM" id="SSF101936">
    <property type="entry name" value="DNA-binding pseudobarrel domain"/>
    <property type="match status" value="1"/>
</dbReference>
<dbReference type="PROSITE" id="PS50863">
    <property type="entry name" value="B3"/>
    <property type="match status" value="1"/>
</dbReference>
<keyword id="KW-0927">Auxin signaling pathway</keyword>
<keyword id="KW-0238">DNA-binding</keyword>
<keyword id="KW-0539">Nucleus</keyword>
<keyword id="KW-1185">Reference proteome</keyword>
<keyword id="KW-0804">Transcription</keyword>
<keyword id="KW-0805">Transcription regulation</keyword>
<reference key="1">
    <citation type="journal article" date="2001" name="Genes Genet. Syst.">
        <title>Auxin response factor family in rice.</title>
        <authorList>
            <person name="Sato Y."/>
            <person name="Nishimura A."/>
            <person name="Ito M."/>
            <person name="Ashikari M."/>
            <person name="Hirano H.-Y."/>
            <person name="Matsuoka M."/>
        </authorList>
    </citation>
    <scope>NUCLEOTIDE SEQUENCE [MRNA]</scope>
    <source>
        <strain>cv. Nipponbare</strain>
    </source>
</reference>
<reference key="2">
    <citation type="journal article" date="2005" name="Mol. Genet. Genomics">
        <title>A fine physical map of the rice chromosome 5.</title>
        <authorList>
            <person name="Cheng C.-H."/>
            <person name="Chung M.C."/>
            <person name="Liu S.-M."/>
            <person name="Chen S.-K."/>
            <person name="Kao F.Y."/>
            <person name="Lin S.-J."/>
            <person name="Hsiao S.-H."/>
            <person name="Tseng I.C."/>
            <person name="Hsing Y.-I.C."/>
            <person name="Wu H.-P."/>
            <person name="Chen C.-S."/>
            <person name="Shaw J.-F."/>
            <person name="Wu J."/>
            <person name="Matsumoto T."/>
            <person name="Sasaki T."/>
            <person name="Chen H.-C."/>
            <person name="Chow T.-Y."/>
        </authorList>
    </citation>
    <scope>NUCLEOTIDE SEQUENCE [LARGE SCALE GENOMIC DNA]</scope>
    <source>
        <strain>cv. Nipponbare</strain>
    </source>
</reference>
<reference key="3">
    <citation type="journal article" date="2005" name="Nature">
        <title>The map-based sequence of the rice genome.</title>
        <authorList>
            <consortium name="International rice genome sequencing project (IRGSP)"/>
        </authorList>
    </citation>
    <scope>NUCLEOTIDE SEQUENCE [LARGE SCALE GENOMIC DNA]</scope>
    <source>
        <strain>cv. Nipponbare</strain>
    </source>
</reference>
<reference key="4">
    <citation type="journal article" date="2008" name="Nucleic Acids Res.">
        <title>The rice annotation project database (RAP-DB): 2008 update.</title>
        <authorList>
            <consortium name="The rice annotation project (RAP)"/>
        </authorList>
    </citation>
    <scope>GENOME REANNOTATION</scope>
    <source>
        <strain>cv. Nipponbare</strain>
    </source>
</reference>
<reference key="5">
    <citation type="journal article" date="2013" name="Rice">
        <title>Improvement of the Oryza sativa Nipponbare reference genome using next generation sequence and optical map data.</title>
        <authorList>
            <person name="Kawahara Y."/>
            <person name="de la Bastide M."/>
            <person name="Hamilton J.P."/>
            <person name="Kanamori H."/>
            <person name="McCombie W.R."/>
            <person name="Ouyang S."/>
            <person name="Schwartz D.C."/>
            <person name="Tanaka T."/>
            <person name="Wu J."/>
            <person name="Zhou S."/>
            <person name="Childs K.L."/>
            <person name="Davidson R.M."/>
            <person name="Lin H."/>
            <person name="Quesada-Ocampo L."/>
            <person name="Vaillancourt B."/>
            <person name="Sakai H."/>
            <person name="Lee S.S."/>
            <person name="Kim J."/>
            <person name="Numa H."/>
            <person name="Itoh T."/>
            <person name="Buell C.R."/>
            <person name="Matsumoto T."/>
        </authorList>
    </citation>
    <scope>GENOME REANNOTATION</scope>
    <source>
        <strain>cv. Nipponbare</strain>
    </source>
</reference>
<reference key="6">
    <citation type="journal article" date="2005" name="PLoS Biol.">
        <title>The genomes of Oryza sativa: a history of duplications.</title>
        <authorList>
            <person name="Yu J."/>
            <person name="Wang J."/>
            <person name="Lin W."/>
            <person name="Li S."/>
            <person name="Li H."/>
            <person name="Zhou J."/>
            <person name="Ni P."/>
            <person name="Dong W."/>
            <person name="Hu S."/>
            <person name="Zeng C."/>
            <person name="Zhang J."/>
            <person name="Zhang Y."/>
            <person name="Li R."/>
            <person name="Xu Z."/>
            <person name="Li S."/>
            <person name="Li X."/>
            <person name="Zheng H."/>
            <person name="Cong L."/>
            <person name="Lin L."/>
            <person name="Yin J."/>
            <person name="Geng J."/>
            <person name="Li G."/>
            <person name="Shi J."/>
            <person name="Liu J."/>
            <person name="Lv H."/>
            <person name="Li J."/>
            <person name="Wang J."/>
            <person name="Deng Y."/>
            <person name="Ran L."/>
            <person name="Shi X."/>
            <person name="Wang X."/>
            <person name="Wu Q."/>
            <person name="Li C."/>
            <person name="Ren X."/>
            <person name="Wang J."/>
            <person name="Wang X."/>
            <person name="Li D."/>
            <person name="Liu D."/>
            <person name="Zhang X."/>
            <person name="Ji Z."/>
            <person name="Zhao W."/>
            <person name="Sun Y."/>
            <person name="Zhang Z."/>
            <person name="Bao J."/>
            <person name="Han Y."/>
            <person name="Dong L."/>
            <person name="Ji J."/>
            <person name="Chen P."/>
            <person name="Wu S."/>
            <person name="Liu J."/>
            <person name="Xiao Y."/>
            <person name="Bu D."/>
            <person name="Tan J."/>
            <person name="Yang L."/>
            <person name="Ye C."/>
            <person name="Zhang J."/>
            <person name="Xu J."/>
            <person name="Zhou Y."/>
            <person name="Yu Y."/>
            <person name="Zhang B."/>
            <person name="Zhuang S."/>
            <person name="Wei H."/>
            <person name="Liu B."/>
            <person name="Lei M."/>
            <person name="Yu H."/>
            <person name="Li Y."/>
            <person name="Xu H."/>
            <person name="Wei S."/>
            <person name="He X."/>
            <person name="Fang L."/>
            <person name="Zhang Z."/>
            <person name="Zhang Y."/>
            <person name="Huang X."/>
            <person name="Su Z."/>
            <person name="Tong W."/>
            <person name="Li J."/>
            <person name="Tong Z."/>
            <person name="Li S."/>
            <person name="Ye J."/>
            <person name="Wang L."/>
            <person name="Fang L."/>
            <person name="Lei T."/>
            <person name="Chen C.-S."/>
            <person name="Chen H.-C."/>
            <person name="Xu Z."/>
            <person name="Li H."/>
            <person name="Huang H."/>
            <person name="Zhang F."/>
            <person name="Xu H."/>
            <person name="Li N."/>
            <person name="Zhao C."/>
            <person name="Li S."/>
            <person name="Dong L."/>
            <person name="Huang Y."/>
            <person name="Li L."/>
            <person name="Xi Y."/>
            <person name="Qi Q."/>
            <person name="Li W."/>
            <person name="Zhang B."/>
            <person name="Hu W."/>
            <person name="Zhang Y."/>
            <person name="Tian X."/>
            <person name="Jiao Y."/>
            <person name="Liang X."/>
            <person name="Jin J."/>
            <person name="Gao L."/>
            <person name="Zheng W."/>
            <person name="Hao B."/>
            <person name="Liu S.-M."/>
            <person name="Wang W."/>
            <person name="Yuan L."/>
            <person name="Cao M."/>
            <person name="McDermott J."/>
            <person name="Samudrala R."/>
            <person name="Wang J."/>
            <person name="Wong G.K.-S."/>
            <person name="Yang H."/>
        </authorList>
    </citation>
    <scope>NUCLEOTIDE SEQUENCE [LARGE SCALE GENOMIC DNA]</scope>
    <source>
        <strain>cv. Nipponbare</strain>
    </source>
</reference>
<reference key="7">
    <citation type="journal article" date="2003" name="Science">
        <title>Collection, mapping, and annotation of over 28,000 cDNA clones from japonica rice.</title>
        <authorList>
            <consortium name="The rice full-length cDNA consortium"/>
        </authorList>
    </citation>
    <scope>NUCLEOTIDE SEQUENCE [LARGE SCALE MRNA] OF 343-712</scope>
    <source>
        <strain>cv. Nipponbare</strain>
    </source>
</reference>
<reference key="8">
    <citation type="journal article" date="2007" name="Gene">
        <title>Genome-wide analysis of the auxin response factors (ARF) gene family in rice (Oryza sativa).</title>
        <authorList>
            <person name="Wang D."/>
            <person name="Pei K."/>
            <person name="Fu Y."/>
            <person name="Sun Z."/>
            <person name="Li S."/>
            <person name="Liu H."/>
            <person name="Tang K."/>
            <person name="Han B."/>
            <person name="Tao Y."/>
        </authorList>
    </citation>
    <scope>GENE FAMILY</scope>
    <scope>TISSUE SPECIFICITY</scope>
    <scope>NOMENCLATURE</scope>
</reference>